<comment type="catalytic activity">
    <reaction evidence="1">
        <text>1-(2-carboxyphenylamino)-1-deoxy-D-ribulose 5-phosphate + H(+) = (1S,2R)-1-C-(indol-3-yl)glycerol 3-phosphate + CO2 + H2O</text>
        <dbReference type="Rhea" id="RHEA:23476"/>
        <dbReference type="ChEBI" id="CHEBI:15377"/>
        <dbReference type="ChEBI" id="CHEBI:15378"/>
        <dbReference type="ChEBI" id="CHEBI:16526"/>
        <dbReference type="ChEBI" id="CHEBI:58613"/>
        <dbReference type="ChEBI" id="CHEBI:58866"/>
        <dbReference type="EC" id="4.1.1.48"/>
    </reaction>
</comment>
<comment type="pathway">
    <text evidence="1">Amino-acid biosynthesis; L-tryptophan biosynthesis; L-tryptophan from chorismate: step 4/5.</text>
</comment>
<comment type="similarity">
    <text evidence="1">Belongs to the TrpC family.</text>
</comment>
<dbReference type="EC" id="4.1.1.48" evidence="1"/>
<dbReference type="EMBL" id="CP000525">
    <property type="protein sequence ID" value="ABM48696.1"/>
    <property type="molecule type" value="Genomic_DNA"/>
</dbReference>
<dbReference type="RefSeq" id="WP_004186826.1">
    <property type="nucleotide sequence ID" value="NC_008784.1"/>
</dbReference>
<dbReference type="SMR" id="A1UWA0"/>
<dbReference type="GeneID" id="92976776"/>
<dbReference type="KEGG" id="bmv:BMASAVP1_0647"/>
<dbReference type="HOGENOM" id="CLU_034247_2_0_4"/>
<dbReference type="UniPathway" id="UPA00035">
    <property type="reaction ID" value="UER00043"/>
</dbReference>
<dbReference type="GO" id="GO:0004425">
    <property type="term" value="F:indole-3-glycerol-phosphate synthase activity"/>
    <property type="evidence" value="ECO:0007669"/>
    <property type="project" value="UniProtKB-UniRule"/>
</dbReference>
<dbReference type="GO" id="GO:0004640">
    <property type="term" value="F:phosphoribosylanthranilate isomerase activity"/>
    <property type="evidence" value="ECO:0007669"/>
    <property type="project" value="TreeGrafter"/>
</dbReference>
<dbReference type="GO" id="GO:0000162">
    <property type="term" value="P:L-tryptophan biosynthetic process"/>
    <property type="evidence" value="ECO:0007669"/>
    <property type="project" value="UniProtKB-UniRule"/>
</dbReference>
<dbReference type="CDD" id="cd00331">
    <property type="entry name" value="IGPS"/>
    <property type="match status" value="1"/>
</dbReference>
<dbReference type="FunFam" id="3.20.20.70:FF:000024">
    <property type="entry name" value="Indole-3-glycerol phosphate synthase"/>
    <property type="match status" value="1"/>
</dbReference>
<dbReference type="Gene3D" id="3.20.20.70">
    <property type="entry name" value="Aldolase class I"/>
    <property type="match status" value="1"/>
</dbReference>
<dbReference type="HAMAP" id="MF_00134_B">
    <property type="entry name" value="IGPS_B"/>
    <property type="match status" value="1"/>
</dbReference>
<dbReference type="InterPro" id="IPR013785">
    <property type="entry name" value="Aldolase_TIM"/>
</dbReference>
<dbReference type="InterPro" id="IPR045186">
    <property type="entry name" value="Indole-3-glycerol_P_synth"/>
</dbReference>
<dbReference type="InterPro" id="IPR013798">
    <property type="entry name" value="Indole-3-glycerol_P_synth_dom"/>
</dbReference>
<dbReference type="InterPro" id="IPR001468">
    <property type="entry name" value="Indole-3-GlycerolPSynthase_CS"/>
</dbReference>
<dbReference type="InterPro" id="IPR011060">
    <property type="entry name" value="RibuloseP-bd_barrel"/>
</dbReference>
<dbReference type="NCBIfam" id="NF001373">
    <property type="entry name" value="PRK00278.1-6"/>
    <property type="match status" value="1"/>
</dbReference>
<dbReference type="NCBIfam" id="NF001377">
    <property type="entry name" value="PRK00278.2-4"/>
    <property type="match status" value="1"/>
</dbReference>
<dbReference type="PANTHER" id="PTHR22854:SF2">
    <property type="entry name" value="INDOLE-3-GLYCEROL-PHOSPHATE SYNTHASE"/>
    <property type="match status" value="1"/>
</dbReference>
<dbReference type="PANTHER" id="PTHR22854">
    <property type="entry name" value="TRYPTOPHAN BIOSYNTHESIS PROTEIN"/>
    <property type="match status" value="1"/>
</dbReference>
<dbReference type="Pfam" id="PF00218">
    <property type="entry name" value="IGPS"/>
    <property type="match status" value="1"/>
</dbReference>
<dbReference type="SUPFAM" id="SSF51366">
    <property type="entry name" value="Ribulose-phoshate binding barrel"/>
    <property type="match status" value="1"/>
</dbReference>
<dbReference type="PROSITE" id="PS00614">
    <property type="entry name" value="IGPS"/>
    <property type="match status" value="1"/>
</dbReference>
<accession>A1UWA0</accession>
<feature type="chain" id="PRO_1000018457" description="Indole-3-glycerol phosphate synthase">
    <location>
        <begin position="1"/>
        <end position="261"/>
    </location>
</feature>
<proteinExistence type="inferred from homology"/>
<name>TRPC_BURMS</name>
<protein>
    <recommendedName>
        <fullName evidence="1">Indole-3-glycerol phosphate synthase</fullName>
        <shortName evidence="1">IGPS</shortName>
        <ecNumber evidence="1">4.1.1.48</ecNumber>
    </recommendedName>
</protein>
<sequence length="261" mass="28383">MSDILDKIIAVKREEIAAALESAPLEELKVQASARDSRDFVGALRDKHAAGHAAVIAEVKKASPSKGVLREHFVPADIARSYAQHGAACLSVLTDERFFQGSARYLEQARAACTLPVLRKDFIVDAYQLLEARAMGADAILLIAAALDTPLMIDLEAYAHSLGLAVLVEVHNRGELDEALKLKTPFVGINNRNLRTFETTIDTTLGMLDAIPDDRIVVTESGILSRADVERMEAAGVHTFLVGEAFMRAENPGAELARMFF</sequence>
<evidence type="ECO:0000255" key="1">
    <source>
        <dbReference type="HAMAP-Rule" id="MF_00134"/>
    </source>
</evidence>
<gene>
    <name evidence="1" type="primary">trpC</name>
    <name type="ordered locus">BMASAVP1_0647</name>
</gene>
<keyword id="KW-0028">Amino-acid biosynthesis</keyword>
<keyword id="KW-0057">Aromatic amino acid biosynthesis</keyword>
<keyword id="KW-0210">Decarboxylase</keyword>
<keyword id="KW-0456">Lyase</keyword>
<keyword id="KW-0822">Tryptophan biosynthesis</keyword>
<reference key="1">
    <citation type="journal article" date="2010" name="Genome Biol. Evol.">
        <title>Continuing evolution of Burkholderia mallei through genome reduction and large-scale rearrangements.</title>
        <authorList>
            <person name="Losada L."/>
            <person name="Ronning C.M."/>
            <person name="DeShazer D."/>
            <person name="Woods D."/>
            <person name="Fedorova N."/>
            <person name="Kim H.S."/>
            <person name="Shabalina S.A."/>
            <person name="Pearson T.R."/>
            <person name="Brinkac L."/>
            <person name="Tan P."/>
            <person name="Nandi T."/>
            <person name="Crabtree J."/>
            <person name="Badger J."/>
            <person name="Beckstrom-Sternberg S."/>
            <person name="Saqib M."/>
            <person name="Schutzer S.E."/>
            <person name="Keim P."/>
            <person name="Nierman W.C."/>
        </authorList>
    </citation>
    <scope>NUCLEOTIDE SEQUENCE [LARGE SCALE GENOMIC DNA]</scope>
    <source>
        <strain>SAVP1</strain>
    </source>
</reference>
<organism>
    <name type="scientific">Burkholderia mallei (strain SAVP1)</name>
    <dbReference type="NCBI Taxonomy" id="320388"/>
    <lineage>
        <taxon>Bacteria</taxon>
        <taxon>Pseudomonadati</taxon>
        <taxon>Pseudomonadota</taxon>
        <taxon>Betaproteobacteria</taxon>
        <taxon>Burkholderiales</taxon>
        <taxon>Burkholderiaceae</taxon>
        <taxon>Burkholderia</taxon>
        <taxon>pseudomallei group</taxon>
    </lineage>
</organism>